<protein>
    <recommendedName>
        <fullName evidence="5">Monoacylglycerol lipase ABHD6</fullName>
        <ecNumber evidence="3">3.1.1.23</ecNumber>
    </recommendedName>
    <alternativeName>
        <fullName evidence="1">2-arachidonoylglycerol hydrolase</fullName>
    </alternativeName>
    <alternativeName>
        <fullName evidence="3">Abhydrolase domain-containing protein 6</fullName>
    </alternativeName>
</protein>
<proteinExistence type="evidence at transcript level"/>
<keyword id="KW-0967">Endosome</keyword>
<keyword id="KW-0378">Hydrolase</keyword>
<keyword id="KW-0443">Lipid metabolism</keyword>
<keyword id="KW-0458">Lysosome</keyword>
<keyword id="KW-0472">Membrane</keyword>
<keyword id="KW-0496">Mitochondrion</keyword>
<keyword id="KW-1185">Reference proteome</keyword>
<keyword id="KW-0735">Signal-anchor</keyword>
<keyword id="KW-0812">Transmembrane</keyword>
<keyword id="KW-1133">Transmembrane helix</keyword>
<feature type="chain" id="PRO_0000281574" description="Monoacylglycerol lipase ABHD6">
    <location>
        <begin position="1"/>
        <end position="337"/>
    </location>
</feature>
<feature type="topological domain" description="Extracellular" evidence="4">
    <location>
        <begin position="1"/>
        <end position="19"/>
    </location>
</feature>
<feature type="transmembrane region" description="Helical; Signal-anchor for type II membrane protein" evidence="4">
    <location>
        <begin position="20"/>
        <end position="42"/>
    </location>
</feature>
<feature type="topological domain" description="Cytoplasmic" evidence="4">
    <location>
        <begin position="43"/>
        <end position="337"/>
    </location>
</feature>
<feature type="domain" description="AB hydrolase-1" evidence="4">
    <location>
        <begin position="72"/>
        <end position="313"/>
    </location>
</feature>
<feature type="active site" description="Nucleophile" evidence="2">
    <location>
        <position position="148"/>
    </location>
</feature>
<feature type="active site" description="Charge relay system" evidence="2">
    <location>
        <position position="278"/>
    </location>
</feature>
<feature type="active site" description="Charge relay system" evidence="2">
    <location>
        <position position="306"/>
    </location>
</feature>
<evidence type="ECO:0000250" key="1">
    <source>
        <dbReference type="UniProtKB" id="Q8R2Y0"/>
    </source>
</evidence>
<evidence type="ECO:0000250" key="2">
    <source>
        <dbReference type="UniProtKB" id="Q99685"/>
    </source>
</evidence>
<evidence type="ECO:0000250" key="3">
    <source>
        <dbReference type="UniProtKB" id="Q9BV23"/>
    </source>
</evidence>
<evidence type="ECO:0000255" key="4"/>
<evidence type="ECO:0000305" key="5"/>
<sequence>MDLDVVNMFVIAGGTLALPILAFVASFLLWPSALIRIYYWYWRRTLGMQVRYVRHEDYQFCYSFRGRPGHKPSILMLHGFSAHKDMWLSMVKFLPKNLHLVCVDMPGHEGTTRSSLDDLSIDGQVKRIHQFVECLKLNKKPFHLVGTSMGGHVAGVYAAHYPSDVCSLSLVCPAGLQYSTDNKFVQRLKELQESAAVEKIPLIPTTPKEMSEMLQLCSYVRFKVPQQILQGLVDVRIPHNTFYRKLFLEIVSEKSRYSLHQNMDKIKVPTQIIWGKQDQVLDVSGADMLAKSIANSQVELLENCGHSVVMERPRKTAKLLVDFLASVHSTDNSKKLD</sequence>
<name>ABHD6_BOVIN</name>
<dbReference type="EC" id="3.1.1.23" evidence="3"/>
<dbReference type="EMBL" id="BC116144">
    <property type="protein sequence ID" value="AAI16145.1"/>
    <property type="molecule type" value="mRNA"/>
</dbReference>
<dbReference type="RefSeq" id="NP_001068664.1">
    <property type="nucleotide sequence ID" value="NM_001075196.1"/>
</dbReference>
<dbReference type="RefSeq" id="XP_005222787.1">
    <property type="nucleotide sequence ID" value="XM_005222730.5"/>
</dbReference>
<dbReference type="RefSeq" id="XP_005222789.1">
    <property type="nucleotide sequence ID" value="XM_005222732.5"/>
</dbReference>
<dbReference type="SMR" id="Q1LZ86"/>
<dbReference type="FunCoup" id="Q1LZ86">
    <property type="interactions" value="154"/>
</dbReference>
<dbReference type="STRING" id="9913.ENSBTAP00000022100"/>
<dbReference type="ESTHER" id="bovin-q1lz86">
    <property type="family name" value="ABHD6-Lip"/>
</dbReference>
<dbReference type="PaxDb" id="9913-ENSBTAP00000022100"/>
<dbReference type="Ensembl" id="ENSBTAT00000022100.5">
    <property type="protein sequence ID" value="ENSBTAP00000022100.4"/>
    <property type="gene ID" value="ENSBTAG00000016615.5"/>
</dbReference>
<dbReference type="GeneID" id="505283"/>
<dbReference type="KEGG" id="bta:505283"/>
<dbReference type="CTD" id="57406"/>
<dbReference type="VEuPathDB" id="HostDB:ENSBTAG00000016615"/>
<dbReference type="VGNC" id="VGNC:25503">
    <property type="gene designation" value="ABHD6"/>
</dbReference>
<dbReference type="eggNOG" id="KOG1454">
    <property type="taxonomic scope" value="Eukaryota"/>
</dbReference>
<dbReference type="GeneTree" id="ENSGT00510000047225"/>
<dbReference type="HOGENOM" id="CLU_020336_13_9_1"/>
<dbReference type="InParanoid" id="Q1LZ86"/>
<dbReference type="OMA" id="NAMWQYS"/>
<dbReference type="OrthoDB" id="6431331at2759"/>
<dbReference type="TreeFam" id="TF331946"/>
<dbReference type="Reactome" id="R-BTA-426048">
    <property type="pathway name" value="Arachidonate production from DAG"/>
</dbReference>
<dbReference type="Proteomes" id="UP000009136">
    <property type="component" value="Chromosome 22"/>
</dbReference>
<dbReference type="Bgee" id="ENSBTAG00000016615">
    <property type="expression patterns" value="Expressed in diaphragm and 104 other cell types or tissues"/>
</dbReference>
<dbReference type="GO" id="GO:0032281">
    <property type="term" value="C:AMPA glutamate receptor complex"/>
    <property type="evidence" value="ECO:0000318"/>
    <property type="project" value="GO_Central"/>
</dbReference>
<dbReference type="GO" id="GO:0098982">
    <property type="term" value="C:GABA-ergic synapse"/>
    <property type="evidence" value="ECO:0007669"/>
    <property type="project" value="Ensembl"/>
</dbReference>
<dbReference type="GO" id="GO:0098978">
    <property type="term" value="C:glutamatergic synapse"/>
    <property type="evidence" value="ECO:0007669"/>
    <property type="project" value="Ensembl"/>
</dbReference>
<dbReference type="GO" id="GO:0031902">
    <property type="term" value="C:late endosome membrane"/>
    <property type="evidence" value="ECO:0000250"/>
    <property type="project" value="UniProtKB"/>
</dbReference>
<dbReference type="GO" id="GO:0005765">
    <property type="term" value="C:lysosomal membrane"/>
    <property type="evidence" value="ECO:0000250"/>
    <property type="project" value="UniProtKB"/>
</dbReference>
<dbReference type="GO" id="GO:0016020">
    <property type="term" value="C:membrane"/>
    <property type="evidence" value="ECO:0000250"/>
    <property type="project" value="UniProtKB"/>
</dbReference>
<dbReference type="GO" id="GO:0031966">
    <property type="term" value="C:mitochondrial membrane"/>
    <property type="evidence" value="ECO:0007669"/>
    <property type="project" value="UniProtKB-SubCell"/>
</dbReference>
<dbReference type="GO" id="GO:0045211">
    <property type="term" value="C:postsynaptic membrane"/>
    <property type="evidence" value="ECO:0007669"/>
    <property type="project" value="Ensembl"/>
</dbReference>
<dbReference type="GO" id="GO:0047372">
    <property type="term" value="F:monoacylglycerol lipase activity"/>
    <property type="evidence" value="ECO:0000250"/>
    <property type="project" value="UniProtKB"/>
</dbReference>
<dbReference type="GO" id="GO:0004620">
    <property type="term" value="F:phospholipase activity"/>
    <property type="evidence" value="ECO:0007669"/>
    <property type="project" value="Ensembl"/>
</dbReference>
<dbReference type="GO" id="GO:0046464">
    <property type="term" value="P:acylglycerol catabolic process"/>
    <property type="evidence" value="ECO:0000250"/>
    <property type="project" value="UniProtKB"/>
</dbReference>
<dbReference type="GO" id="GO:0060292">
    <property type="term" value="P:long-term synaptic depression"/>
    <property type="evidence" value="ECO:0007669"/>
    <property type="project" value="Ensembl"/>
</dbReference>
<dbReference type="GO" id="GO:2001311">
    <property type="term" value="P:lysobisphosphatidic acid metabolic process"/>
    <property type="evidence" value="ECO:0000250"/>
    <property type="project" value="UniProtKB"/>
</dbReference>
<dbReference type="GO" id="GO:0052651">
    <property type="term" value="P:monoacylglycerol catabolic process"/>
    <property type="evidence" value="ECO:0000250"/>
    <property type="project" value="UniProtKB"/>
</dbReference>
<dbReference type="GO" id="GO:0030336">
    <property type="term" value="P:negative regulation of cell migration"/>
    <property type="evidence" value="ECO:0007669"/>
    <property type="project" value="Ensembl"/>
</dbReference>
<dbReference type="GO" id="GO:0120163">
    <property type="term" value="P:negative regulation of cold-induced thermogenesis"/>
    <property type="evidence" value="ECO:0007669"/>
    <property type="project" value="Ensembl"/>
</dbReference>
<dbReference type="GO" id="GO:0009395">
    <property type="term" value="P:phospholipid catabolic process"/>
    <property type="evidence" value="ECO:0007669"/>
    <property type="project" value="Ensembl"/>
</dbReference>
<dbReference type="GO" id="GO:0046889">
    <property type="term" value="P:positive regulation of lipid biosynthetic process"/>
    <property type="evidence" value="ECO:0007669"/>
    <property type="project" value="Ensembl"/>
</dbReference>
<dbReference type="GO" id="GO:2000124">
    <property type="term" value="P:regulation of endocannabinoid signaling pathway"/>
    <property type="evidence" value="ECO:0007669"/>
    <property type="project" value="Ensembl"/>
</dbReference>
<dbReference type="GO" id="GO:0099178">
    <property type="term" value="P:regulation of retrograde trans-synaptic signaling by endocanabinoid"/>
    <property type="evidence" value="ECO:0007669"/>
    <property type="project" value="Ensembl"/>
</dbReference>
<dbReference type="FunFam" id="3.40.50.1820:FF:000082">
    <property type="entry name" value="monoacylglycerol lipase ABHD6"/>
    <property type="match status" value="1"/>
</dbReference>
<dbReference type="Gene3D" id="3.40.50.1820">
    <property type="entry name" value="alpha/beta hydrolase"/>
    <property type="match status" value="1"/>
</dbReference>
<dbReference type="InterPro" id="IPR000073">
    <property type="entry name" value="AB_hydrolase_1"/>
</dbReference>
<dbReference type="InterPro" id="IPR029058">
    <property type="entry name" value="AB_hydrolase_fold"/>
</dbReference>
<dbReference type="InterPro" id="IPR050266">
    <property type="entry name" value="AB_hydrolase_sf"/>
</dbReference>
<dbReference type="PANTHER" id="PTHR43798">
    <property type="entry name" value="MONOACYLGLYCEROL LIPASE"/>
    <property type="match status" value="1"/>
</dbReference>
<dbReference type="PANTHER" id="PTHR43798:SF5">
    <property type="entry name" value="MONOACYLGLYCEROL LIPASE ABHD6"/>
    <property type="match status" value="1"/>
</dbReference>
<dbReference type="Pfam" id="PF00561">
    <property type="entry name" value="Abhydrolase_1"/>
    <property type="match status" value="1"/>
</dbReference>
<dbReference type="PRINTS" id="PR00111">
    <property type="entry name" value="ABHYDROLASE"/>
</dbReference>
<dbReference type="SUPFAM" id="SSF53474">
    <property type="entry name" value="alpha/beta-Hydrolases"/>
    <property type="match status" value="1"/>
</dbReference>
<reference key="1">
    <citation type="submission" date="2006-05" db="EMBL/GenBank/DDBJ databases">
        <authorList>
            <consortium name="NIH - Mammalian Gene Collection (MGC) project"/>
        </authorList>
    </citation>
    <scope>NUCLEOTIDE SEQUENCE [LARGE SCALE MRNA]</scope>
    <source>
        <strain>Hereford</strain>
        <tissue>Hippocampus</tissue>
    </source>
</reference>
<gene>
    <name evidence="3" type="primary">ABHD6</name>
</gene>
<organism>
    <name type="scientific">Bos taurus</name>
    <name type="common">Bovine</name>
    <dbReference type="NCBI Taxonomy" id="9913"/>
    <lineage>
        <taxon>Eukaryota</taxon>
        <taxon>Metazoa</taxon>
        <taxon>Chordata</taxon>
        <taxon>Craniata</taxon>
        <taxon>Vertebrata</taxon>
        <taxon>Euteleostomi</taxon>
        <taxon>Mammalia</taxon>
        <taxon>Eutheria</taxon>
        <taxon>Laurasiatheria</taxon>
        <taxon>Artiodactyla</taxon>
        <taxon>Ruminantia</taxon>
        <taxon>Pecora</taxon>
        <taxon>Bovidae</taxon>
        <taxon>Bovinae</taxon>
        <taxon>Bos</taxon>
    </lineage>
</organism>
<comment type="function">
    <text evidence="1 3">Lipase that preferentially hydrolysis medium-chain saturated monoacylglycerols including 2-arachidonoylglycerol (By similarity). Through 2-arachidonoylglycerol degradation may regulate endocannabinoid signaling pathways. Also has a lysophosphatidyl lipase activity with a preference for lysophosphatidylglycerol among other lysophospholipids (By similarity). Also able to degrade bis(monoacylglycero)phosphate (BMP) and constitutes the major enzyme for BMP catabolism. BMP, also known as lysobisphosphatidic acid, is enriched in late endosomes and lysosomes and plays a key role in the formation of intraluminal vesicles and in lipid sorting (By similarity).</text>
</comment>
<comment type="catalytic activity">
    <reaction evidence="3">
        <text>Hydrolyzes glycerol monoesters of long-chain fatty acids.</text>
        <dbReference type="EC" id="3.1.1.23"/>
    </reaction>
</comment>
<comment type="catalytic activity">
    <reaction evidence="3">
        <text>1-octanoylglycerol + H2O = octanoate + glycerol + H(+)</text>
        <dbReference type="Rhea" id="RHEA:44328"/>
        <dbReference type="ChEBI" id="CHEBI:15377"/>
        <dbReference type="ChEBI" id="CHEBI:15378"/>
        <dbReference type="ChEBI" id="CHEBI:17754"/>
        <dbReference type="ChEBI" id="CHEBI:25646"/>
        <dbReference type="ChEBI" id="CHEBI:85241"/>
    </reaction>
</comment>
<comment type="catalytic activity">
    <reaction evidence="3">
        <text>1-decanoylglycerol + H2O = decanoate + glycerol + H(+)</text>
        <dbReference type="Rhea" id="RHEA:44320"/>
        <dbReference type="ChEBI" id="CHEBI:15377"/>
        <dbReference type="ChEBI" id="CHEBI:15378"/>
        <dbReference type="ChEBI" id="CHEBI:17754"/>
        <dbReference type="ChEBI" id="CHEBI:27689"/>
        <dbReference type="ChEBI" id="CHEBI:75547"/>
    </reaction>
</comment>
<comment type="catalytic activity">
    <reaction evidence="3">
        <text>1-dodecanoylglycerol + H2O = dodecanoate + glycerol + H(+)</text>
        <dbReference type="Rhea" id="RHEA:44316"/>
        <dbReference type="ChEBI" id="CHEBI:15377"/>
        <dbReference type="ChEBI" id="CHEBI:15378"/>
        <dbReference type="ChEBI" id="CHEBI:17754"/>
        <dbReference type="ChEBI" id="CHEBI:18262"/>
        <dbReference type="ChEBI" id="CHEBI:75539"/>
    </reaction>
</comment>
<comment type="catalytic activity">
    <reaction evidence="3">
        <text>1-tetradecanoylglycerol + H2O = tetradecanoate + glycerol + H(+)</text>
        <dbReference type="Rhea" id="RHEA:44312"/>
        <dbReference type="ChEBI" id="CHEBI:15377"/>
        <dbReference type="ChEBI" id="CHEBI:15378"/>
        <dbReference type="ChEBI" id="CHEBI:17754"/>
        <dbReference type="ChEBI" id="CHEBI:30807"/>
        <dbReference type="ChEBI" id="CHEBI:75562"/>
    </reaction>
</comment>
<comment type="catalytic activity">
    <reaction evidence="3">
        <text>2-hexadecanoylglycerol + H2O = glycerol + hexadecanoate + H(+)</text>
        <dbReference type="Rhea" id="RHEA:39963"/>
        <dbReference type="ChEBI" id="CHEBI:7896"/>
        <dbReference type="ChEBI" id="CHEBI:15377"/>
        <dbReference type="ChEBI" id="CHEBI:15378"/>
        <dbReference type="ChEBI" id="CHEBI:17754"/>
        <dbReference type="ChEBI" id="CHEBI:75455"/>
    </reaction>
</comment>
<comment type="catalytic activity">
    <reaction evidence="3">
        <text>2-(9Z-octadecenoyl)-glycerol + H2O = glycerol + (9Z)-octadecenoate + H(+)</text>
        <dbReference type="Rhea" id="RHEA:38491"/>
        <dbReference type="ChEBI" id="CHEBI:15377"/>
        <dbReference type="ChEBI" id="CHEBI:15378"/>
        <dbReference type="ChEBI" id="CHEBI:17754"/>
        <dbReference type="ChEBI" id="CHEBI:30823"/>
        <dbReference type="ChEBI" id="CHEBI:73990"/>
    </reaction>
</comment>
<comment type="catalytic activity">
    <reaction evidence="3">
        <text>1-(9Z-octadecenoyl)-glycerol + H2O = glycerol + (9Z)-octadecenoate + H(+)</text>
        <dbReference type="Rhea" id="RHEA:38487"/>
        <dbReference type="ChEBI" id="CHEBI:15377"/>
        <dbReference type="ChEBI" id="CHEBI:15378"/>
        <dbReference type="ChEBI" id="CHEBI:17754"/>
        <dbReference type="ChEBI" id="CHEBI:30823"/>
        <dbReference type="ChEBI" id="CHEBI:75342"/>
    </reaction>
</comment>
<comment type="catalytic activity">
    <reaction evidence="3">
        <text>2-(9Z,12Z-octadecadienoyl)-glycerol + H2O = (9Z,12Z)-octadecadienoate + glycerol + H(+)</text>
        <dbReference type="Rhea" id="RHEA:44732"/>
        <dbReference type="ChEBI" id="CHEBI:15377"/>
        <dbReference type="ChEBI" id="CHEBI:15378"/>
        <dbReference type="ChEBI" id="CHEBI:17754"/>
        <dbReference type="ChEBI" id="CHEBI:30245"/>
        <dbReference type="ChEBI" id="CHEBI:75457"/>
    </reaction>
</comment>
<comment type="catalytic activity">
    <reaction evidence="3">
        <text>2-(5Z,8Z,11Z,14Z-eicosatetraenoyl)-glycerol + H2O = glycerol + (5Z,8Z,11Z,14Z)-eicosatetraenoate + H(+)</text>
        <dbReference type="Rhea" id="RHEA:26132"/>
        <dbReference type="ChEBI" id="CHEBI:15377"/>
        <dbReference type="ChEBI" id="CHEBI:15378"/>
        <dbReference type="ChEBI" id="CHEBI:17754"/>
        <dbReference type="ChEBI" id="CHEBI:32395"/>
        <dbReference type="ChEBI" id="CHEBI:52392"/>
    </reaction>
</comment>
<comment type="catalytic activity">
    <reaction evidence="3">
        <text>1-(5Z,8Z,11Z,14Z-eicosatetraenoyl)-glycerol + H2O = glycerol + (5Z,8Z,11Z,14Z)-eicosatetraenoate + H(+)</text>
        <dbReference type="Rhea" id="RHEA:44728"/>
        <dbReference type="ChEBI" id="CHEBI:15377"/>
        <dbReference type="ChEBI" id="CHEBI:15378"/>
        <dbReference type="ChEBI" id="CHEBI:17754"/>
        <dbReference type="ChEBI" id="CHEBI:32395"/>
        <dbReference type="ChEBI" id="CHEBI:75612"/>
    </reaction>
</comment>
<comment type="catalytic activity">
    <reaction evidence="3">
        <text>1-(9Z,12Z-octadecadienoyl)-glycerol + H2O = (9Z,12Z)-octadecadienoate + glycerol + H(+)</text>
        <dbReference type="Rhea" id="RHEA:48428"/>
        <dbReference type="ChEBI" id="CHEBI:15377"/>
        <dbReference type="ChEBI" id="CHEBI:15378"/>
        <dbReference type="ChEBI" id="CHEBI:17754"/>
        <dbReference type="ChEBI" id="CHEBI:30245"/>
        <dbReference type="ChEBI" id="CHEBI:75568"/>
    </reaction>
</comment>
<comment type="catalytic activity">
    <reaction evidence="3">
        <text>3-(9Z-octadecenoyl)-sn-glycero-1-phospho-(3'-(9Z-octadecenoyl)-1'-sn-glycerol) + H2O = 3-(9Z-octadecenoyl)-sn-glycero-1-phospho-(1'-sn-glycerol) + (9Z)-octadecenoate + H(+)</text>
        <dbReference type="Rhea" id="RHEA:55712"/>
        <dbReference type="ChEBI" id="CHEBI:15377"/>
        <dbReference type="ChEBI" id="CHEBI:15378"/>
        <dbReference type="ChEBI" id="CHEBI:30823"/>
        <dbReference type="ChEBI" id="CHEBI:139150"/>
        <dbReference type="ChEBI" id="CHEBI:139152"/>
    </reaction>
</comment>
<comment type="catalytic activity">
    <reaction evidence="1">
        <text>(S,S)-2-(9Z-octadecenoyl)-sn-glycero-1-phospho-(2'-(9Z-octadecenoyl)-1'-sn-glycerol) + H2O = (S,S)-2-(9Z-octadecenoyl)-sn-glycero-1-phospho-(1'-sn-glycerol) + (9Z)-octadecenoate + H(+)</text>
        <dbReference type="Rhea" id="RHEA:55716"/>
        <dbReference type="ChEBI" id="CHEBI:15377"/>
        <dbReference type="ChEBI" id="CHEBI:15378"/>
        <dbReference type="ChEBI" id="CHEBI:30823"/>
        <dbReference type="ChEBI" id="CHEBI:139156"/>
        <dbReference type="ChEBI" id="CHEBI:139157"/>
    </reaction>
</comment>
<comment type="catalytic activity">
    <reaction evidence="1">
        <text>(R,R)-2-(9Z-octadecenoyl)-sn-glycero-3-phospho-(2'-(9Z-octadecenoyl)-3'-sn-glycerol) + H2O = (R,R)-2-(9Z-octadecenoyl)-sn-glycero-3-phospho-(3'-sn-glycerol) + (9Z)-octadecenoate + H(+)</text>
        <dbReference type="Rhea" id="RHEA:55804"/>
        <dbReference type="ChEBI" id="CHEBI:15377"/>
        <dbReference type="ChEBI" id="CHEBI:15378"/>
        <dbReference type="ChEBI" id="CHEBI:30823"/>
        <dbReference type="ChEBI" id="CHEBI:139228"/>
        <dbReference type="ChEBI" id="CHEBI:139230"/>
    </reaction>
</comment>
<comment type="subcellular location">
    <subcellularLocation>
        <location evidence="1">Late endosome membrane</location>
        <topology evidence="4">Single-pass type II membrane protein</topology>
    </subcellularLocation>
    <subcellularLocation>
        <location evidence="1">Lysosome membrane</location>
        <topology evidence="4">Single-pass type II membrane protein</topology>
    </subcellularLocation>
    <subcellularLocation>
        <location evidence="1">Mitochondrion membrane</location>
        <topology evidence="4">Single-pass type II membrane protein</topology>
    </subcellularLocation>
</comment>
<comment type="similarity">
    <text evidence="5">Belongs to the AB hydrolase superfamily.</text>
</comment>
<accession>Q1LZ86</accession>